<feature type="chain" id="PRO_1000201321" description="Probable [Fe-S]-dependent transcriptional repressor">
    <location>
        <begin position="1"/>
        <end position="78"/>
    </location>
</feature>
<feature type="binding site" evidence="1">
    <location>
        <position position="56"/>
    </location>
    <ligand>
        <name>iron-sulfur cluster</name>
        <dbReference type="ChEBI" id="CHEBI:30408"/>
    </ligand>
</feature>
<feature type="binding site" evidence="1">
    <location>
        <position position="61"/>
    </location>
    <ligand>
        <name>iron-sulfur cluster</name>
        <dbReference type="ChEBI" id="CHEBI:30408"/>
    </ligand>
</feature>
<feature type="binding site" evidence="1">
    <location>
        <position position="64"/>
    </location>
    <ligand>
        <name>iron-sulfur cluster</name>
        <dbReference type="ChEBI" id="CHEBI:30408"/>
    </ligand>
</feature>
<feature type="binding site" evidence="1">
    <location>
        <position position="70"/>
    </location>
    <ligand>
        <name>iron-sulfur cluster</name>
        <dbReference type="ChEBI" id="CHEBI:30408"/>
    </ligand>
</feature>
<keyword id="KW-0238">DNA-binding</keyword>
<keyword id="KW-0408">Iron</keyword>
<keyword id="KW-0411">Iron-sulfur</keyword>
<keyword id="KW-0479">Metal-binding</keyword>
<keyword id="KW-0678">Repressor</keyword>
<keyword id="KW-0804">Transcription</keyword>
<keyword id="KW-0805">Transcription regulation</keyword>
<evidence type="ECO:0000255" key="1">
    <source>
        <dbReference type="HAMAP-Rule" id="MF_01586"/>
    </source>
</evidence>
<accession>B1LHL0</accession>
<organism>
    <name type="scientific">Escherichia coli (strain SMS-3-5 / SECEC)</name>
    <dbReference type="NCBI Taxonomy" id="439855"/>
    <lineage>
        <taxon>Bacteria</taxon>
        <taxon>Pseudomonadati</taxon>
        <taxon>Pseudomonadota</taxon>
        <taxon>Gammaproteobacteria</taxon>
        <taxon>Enterobacterales</taxon>
        <taxon>Enterobacteriaceae</taxon>
        <taxon>Escherichia</taxon>
    </lineage>
</organism>
<name>FEOC_ECOSM</name>
<proteinExistence type="inferred from homology"/>
<protein>
    <recommendedName>
        <fullName evidence="1">Probable [Fe-S]-dependent transcriptional repressor</fullName>
    </recommendedName>
</protein>
<dbReference type="EMBL" id="CP000970">
    <property type="protein sequence ID" value="ACB18949.1"/>
    <property type="molecule type" value="Genomic_DNA"/>
</dbReference>
<dbReference type="RefSeq" id="WP_000157586.1">
    <property type="nucleotide sequence ID" value="NC_010498.1"/>
</dbReference>
<dbReference type="BMRB" id="B1LHL0"/>
<dbReference type="SMR" id="B1LHL0"/>
<dbReference type="GeneID" id="86948257"/>
<dbReference type="KEGG" id="ecm:EcSMS35_3691"/>
<dbReference type="HOGENOM" id="CLU_189182_0_0_6"/>
<dbReference type="Proteomes" id="UP000007011">
    <property type="component" value="Chromosome"/>
</dbReference>
<dbReference type="GO" id="GO:0003677">
    <property type="term" value="F:DNA binding"/>
    <property type="evidence" value="ECO:0007669"/>
    <property type="project" value="UniProtKB-KW"/>
</dbReference>
<dbReference type="GO" id="GO:0005506">
    <property type="term" value="F:iron ion binding"/>
    <property type="evidence" value="ECO:0007669"/>
    <property type="project" value="UniProtKB-UniRule"/>
</dbReference>
<dbReference type="GO" id="GO:0051536">
    <property type="term" value="F:iron-sulfur cluster binding"/>
    <property type="evidence" value="ECO:0007669"/>
    <property type="project" value="UniProtKB-KW"/>
</dbReference>
<dbReference type="Gene3D" id="1.10.10.10">
    <property type="entry name" value="Winged helix-like DNA-binding domain superfamily/Winged helix DNA-binding domain"/>
    <property type="match status" value="1"/>
</dbReference>
<dbReference type="HAMAP" id="MF_01586">
    <property type="entry name" value="FeoC"/>
    <property type="match status" value="1"/>
</dbReference>
<dbReference type="InterPro" id="IPR023732">
    <property type="entry name" value="FeoC"/>
</dbReference>
<dbReference type="InterPro" id="IPR015102">
    <property type="entry name" value="Tscrpt_reg_HTH_FeoC"/>
</dbReference>
<dbReference type="InterPro" id="IPR036388">
    <property type="entry name" value="WH-like_DNA-bd_sf"/>
</dbReference>
<dbReference type="InterPro" id="IPR036390">
    <property type="entry name" value="WH_DNA-bd_sf"/>
</dbReference>
<dbReference type="NCBIfam" id="NF011960">
    <property type="entry name" value="PRK15431.1"/>
    <property type="match status" value="1"/>
</dbReference>
<dbReference type="Pfam" id="PF09012">
    <property type="entry name" value="FeoC"/>
    <property type="match status" value="1"/>
</dbReference>
<dbReference type="SUPFAM" id="SSF46785">
    <property type="entry name" value="Winged helix' DNA-binding domain"/>
    <property type="match status" value="1"/>
</dbReference>
<gene>
    <name evidence="1" type="primary">feoC</name>
    <name type="ordered locus">EcSMS35_3691</name>
</gene>
<reference key="1">
    <citation type="journal article" date="2008" name="J. Bacteriol.">
        <title>Insights into the environmental resistance gene pool from the genome sequence of the multidrug-resistant environmental isolate Escherichia coli SMS-3-5.</title>
        <authorList>
            <person name="Fricke W.F."/>
            <person name="Wright M.S."/>
            <person name="Lindell A.H."/>
            <person name="Harkins D.M."/>
            <person name="Baker-Austin C."/>
            <person name="Ravel J."/>
            <person name="Stepanauskas R."/>
        </authorList>
    </citation>
    <scope>NUCLEOTIDE SEQUENCE [LARGE SCALE GENOMIC DNA]</scope>
    <source>
        <strain>SMS-3-5 / SECEC</strain>
    </source>
</reference>
<sequence>MASLIQVRDLLALRGRMEAAQISQTLNTPQPMINAMLQQLESMGKAVRIQEEPDGCLSGSCKSCPEGKACLREWWALR</sequence>
<comment type="function">
    <text evidence="1">May function as a transcriptional regulator that controls feoABC expression.</text>
</comment>
<comment type="similarity">
    <text evidence="1">Belongs to the FeoC family.</text>
</comment>